<keyword id="KW-0997">Cell inner membrane</keyword>
<keyword id="KW-1003">Cell membrane</keyword>
<keyword id="KW-0472">Membrane</keyword>
<keyword id="KW-1185">Reference proteome</keyword>
<keyword id="KW-0769">Symport</keyword>
<keyword id="KW-0812">Transmembrane</keyword>
<keyword id="KW-1133">Transmembrane helix</keyword>
<keyword id="KW-0813">Transport</keyword>
<evidence type="ECO:0000255" key="1">
    <source>
        <dbReference type="HAMAP-Rule" id="MF_01300"/>
    </source>
</evidence>
<reference key="1">
    <citation type="journal article" date="2002" name="DNA Res.">
        <title>Complete genomic sequence of nitrogen-fixing symbiotic bacterium Bradyrhizobium japonicum USDA110.</title>
        <authorList>
            <person name="Kaneko T."/>
            <person name="Nakamura Y."/>
            <person name="Sato S."/>
            <person name="Minamisawa K."/>
            <person name="Uchiumi T."/>
            <person name="Sasamoto S."/>
            <person name="Watanabe A."/>
            <person name="Idesawa K."/>
            <person name="Iriguchi M."/>
            <person name="Kawashima K."/>
            <person name="Kohara M."/>
            <person name="Matsumoto M."/>
            <person name="Shimpo S."/>
            <person name="Tsuruoka H."/>
            <person name="Wada T."/>
            <person name="Yamada M."/>
            <person name="Tabata S."/>
        </authorList>
    </citation>
    <scope>NUCLEOTIDE SEQUENCE [LARGE SCALE GENOMIC DNA]</scope>
    <source>
        <strain>JCM 10833 / BCRC 13528 / IAM 13628 / NBRC 14792 / USDA 110</strain>
    </source>
</reference>
<accession>Q89EA0</accession>
<dbReference type="EMBL" id="BA000040">
    <property type="protein sequence ID" value="BAC52452.1"/>
    <property type="molecule type" value="Genomic_DNA"/>
</dbReference>
<dbReference type="RefSeq" id="NP_773827.1">
    <property type="nucleotide sequence ID" value="NC_004463.1"/>
</dbReference>
<dbReference type="RefSeq" id="WP_011089922.1">
    <property type="nucleotide sequence ID" value="NC_004463.1"/>
</dbReference>
<dbReference type="SMR" id="Q89EA0"/>
<dbReference type="FunCoup" id="Q89EA0">
    <property type="interactions" value="322"/>
</dbReference>
<dbReference type="STRING" id="224911.AAV28_33580"/>
<dbReference type="EnsemblBacteria" id="BAC52452">
    <property type="protein sequence ID" value="BAC52452"/>
    <property type="gene ID" value="BAC52452"/>
</dbReference>
<dbReference type="GeneID" id="46494151"/>
<dbReference type="KEGG" id="bja:blr7187"/>
<dbReference type="PATRIC" id="fig|224911.44.peg.7255"/>
<dbReference type="eggNOG" id="COG1301">
    <property type="taxonomic scope" value="Bacteria"/>
</dbReference>
<dbReference type="HOGENOM" id="CLU_019375_7_0_5"/>
<dbReference type="InParanoid" id="Q89EA0"/>
<dbReference type="OrthoDB" id="9766690at2"/>
<dbReference type="PhylomeDB" id="Q89EA0"/>
<dbReference type="Proteomes" id="UP000002526">
    <property type="component" value="Chromosome"/>
</dbReference>
<dbReference type="GO" id="GO:0005886">
    <property type="term" value="C:plasma membrane"/>
    <property type="evidence" value="ECO:0000318"/>
    <property type="project" value="GO_Central"/>
</dbReference>
<dbReference type="GO" id="GO:0015138">
    <property type="term" value="F:fumarate transmembrane transporter activity"/>
    <property type="evidence" value="ECO:0000318"/>
    <property type="project" value="GO_Central"/>
</dbReference>
<dbReference type="GO" id="GO:0015366">
    <property type="term" value="F:malate:proton symporter activity"/>
    <property type="evidence" value="ECO:0000318"/>
    <property type="project" value="GO_Central"/>
</dbReference>
<dbReference type="GO" id="GO:0015141">
    <property type="term" value="F:succinate transmembrane transporter activity"/>
    <property type="evidence" value="ECO:0000318"/>
    <property type="project" value="GO_Central"/>
</dbReference>
<dbReference type="GO" id="GO:0070778">
    <property type="term" value="P:L-aspartate transmembrane transport"/>
    <property type="evidence" value="ECO:0000318"/>
    <property type="project" value="GO_Central"/>
</dbReference>
<dbReference type="FunFam" id="1.10.3860.10:FF:000001">
    <property type="entry name" value="C4-dicarboxylate transport protein"/>
    <property type="match status" value="1"/>
</dbReference>
<dbReference type="Gene3D" id="1.10.3860.10">
    <property type="entry name" value="Sodium:dicarboxylate symporter"/>
    <property type="match status" value="1"/>
</dbReference>
<dbReference type="HAMAP" id="MF_01300">
    <property type="entry name" value="C4_dicarb_transport"/>
    <property type="match status" value="1"/>
</dbReference>
<dbReference type="InterPro" id="IPR023954">
    <property type="entry name" value="C4_dicarb_transport"/>
</dbReference>
<dbReference type="InterPro" id="IPR001991">
    <property type="entry name" value="Na-dicarboxylate_symporter"/>
</dbReference>
<dbReference type="InterPro" id="IPR018107">
    <property type="entry name" value="Na-dicarboxylate_symporter_CS"/>
</dbReference>
<dbReference type="InterPro" id="IPR036458">
    <property type="entry name" value="Na:dicarbo_symporter_sf"/>
</dbReference>
<dbReference type="NCBIfam" id="NF002461">
    <property type="entry name" value="PRK01663.1"/>
    <property type="match status" value="1"/>
</dbReference>
<dbReference type="PANTHER" id="PTHR42865:SF1">
    <property type="entry name" value="AEROBIC C4-DICARBOXYLATE TRANSPORT PROTEIN"/>
    <property type="match status" value="1"/>
</dbReference>
<dbReference type="PANTHER" id="PTHR42865">
    <property type="entry name" value="PROTON/GLUTAMATE-ASPARTATE SYMPORTER"/>
    <property type="match status" value="1"/>
</dbReference>
<dbReference type="Pfam" id="PF00375">
    <property type="entry name" value="SDF"/>
    <property type="match status" value="1"/>
</dbReference>
<dbReference type="PRINTS" id="PR00173">
    <property type="entry name" value="EDTRNSPORT"/>
</dbReference>
<dbReference type="SUPFAM" id="SSF118215">
    <property type="entry name" value="Proton glutamate symport protein"/>
    <property type="match status" value="1"/>
</dbReference>
<dbReference type="PROSITE" id="PS00713">
    <property type="entry name" value="NA_DICARBOXYL_SYMP_1"/>
    <property type="match status" value="1"/>
</dbReference>
<dbReference type="PROSITE" id="PS00714">
    <property type="entry name" value="NA_DICARBOXYL_SYMP_2"/>
    <property type="match status" value="1"/>
</dbReference>
<comment type="function">
    <text evidence="1">Responsible for the transport of dicarboxylates such as succinate, fumarate, and malate from the periplasm across the membrane.</text>
</comment>
<comment type="subcellular location">
    <subcellularLocation>
        <location evidence="1">Cell inner membrane</location>
        <topology evidence="1">Multi-pass membrane protein</topology>
    </subcellularLocation>
</comment>
<comment type="similarity">
    <text evidence="1">Belongs to the dicarboxylate/amino acid:cation symporter (DAACS) (TC 2.A.23) family.</text>
</comment>
<gene>
    <name evidence="1" type="primary">dctA4</name>
    <name type="ordered locus">blr7187</name>
</gene>
<organism>
    <name type="scientific">Bradyrhizobium diazoefficiens (strain JCM 10833 / BCRC 13528 / IAM 13628 / NBRC 14792 / USDA 110)</name>
    <dbReference type="NCBI Taxonomy" id="224911"/>
    <lineage>
        <taxon>Bacteria</taxon>
        <taxon>Pseudomonadati</taxon>
        <taxon>Pseudomonadota</taxon>
        <taxon>Alphaproteobacteria</taxon>
        <taxon>Hyphomicrobiales</taxon>
        <taxon>Nitrobacteraceae</taxon>
        <taxon>Bradyrhizobium</taxon>
    </lineage>
</organism>
<name>DCTA4_BRADU</name>
<proteinExistence type="inferred from homology"/>
<sequence>MTQIAIQPAIRRRHQPWYKILYVQVLIAIVLGVLIGYFYPDFGKELKPLGDGFIALIKMMIAPVIFCTVVHGISSMGDLKRVGRVGLKSLIYFESVSTVALAVGLLVGEVLQPGHGFNIDPATIDPKSVATYVTKAKEEGIVAHLMAIIPDSYVGAIARGDLLQVLLISILSGFAIAFLGKAGEPIADAIDKAAKMFFGIIRIIVRVAPVGAFGAMAFTVGAYGLGSLLNLAALIGTFYLTSILFVLIVLGAIARLAGFSILRFIAYIKDELLIVLGTSSSETVLPQMIQKMEHLGASRSVVGLVIPTGYSFNLDGTNIYMTLATLFLAQATNTHLTIWQELGILGIAMITSKGASGVTGAGFITLAATLSIVPDIPIQSIAILVGIDKFMSECRALTNLIGNGVACVVISISEGELDRDALHETMAHPLEIGEALEPGGGA</sequence>
<feature type="chain" id="PRO_0000321972" description="C4-dicarboxylate transport protein 4">
    <location>
        <begin position="1"/>
        <end position="442"/>
    </location>
</feature>
<feature type="transmembrane region" description="Helical" evidence="1">
    <location>
        <begin position="20"/>
        <end position="40"/>
    </location>
</feature>
<feature type="transmembrane region" description="Helical" evidence="1">
    <location>
        <begin position="53"/>
        <end position="73"/>
    </location>
</feature>
<feature type="transmembrane region" description="Helical" evidence="1">
    <location>
        <begin position="90"/>
        <end position="110"/>
    </location>
</feature>
<feature type="transmembrane region" description="Helical" evidence="1">
    <location>
        <begin position="160"/>
        <end position="180"/>
    </location>
</feature>
<feature type="transmembrane region" description="Helical" evidence="1">
    <location>
        <begin position="209"/>
        <end position="229"/>
    </location>
</feature>
<feature type="transmembrane region" description="Helical" evidence="1">
    <location>
        <begin position="233"/>
        <end position="253"/>
    </location>
</feature>
<protein>
    <recommendedName>
        <fullName evidence="1">C4-dicarboxylate transport protein 4</fullName>
    </recommendedName>
</protein>